<reference key="1">
    <citation type="journal article" date="2005" name="DNA Res.">
        <title>Complete genome sequence of the facultative anaerobic magnetotactic bacterium Magnetospirillum sp. strain AMB-1.</title>
        <authorList>
            <person name="Matsunaga T."/>
            <person name="Okamura Y."/>
            <person name="Fukuda Y."/>
            <person name="Wahyudi A.T."/>
            <person name="Murase Y."/>
            <person name="Takeyama H."/>
        </authorList>
    </citation>
    <scope>NUCLEOTIDE SEQUENCE [LARGE SCALE GENOMIC DNA]</scope>
    <source>
        <strain>ATCC 700264 / AMB-1</strain>
    </source>
</reference>
<proteinExistence type="inferred from homology"/>
<evidence type="ECO:0000255" key="1">
    <source>
        <dbReference type="HAMAP-Rule" id="MF_01309"/>
    </source>
</evidence>
<evidence type="ECO:0000305" key="2"/>
<dbReference type="EMBL" id="AP007255">
    <property type="protein sequence ID" value="BAE51928.1"/>
    <property type="molecule type" value="Genomic_DNA"/>
</dbReference>
<dbReference type="RefSeq" id="WP_011385494.1">
    <property type="nucleotide sequence ID" value="NC_007626.1"/>
</dbReference>
<dbReference type="SMR" id="Q2W2J7"/>
<dbReference type="STRING" id="342108.amb3124"/>
<dbReference type="KEGG" id="mag:amb3124"/>
<dbReference type="HOGENOM" id="CLU_058591_0_2_5"/>
<dbReference type="OrthoDB" id="9806396at2"/>
<dbReference type="Proteomes" id="UP000007058">
    <property type="component" value="Chromosome"/>
</dbReference>
<dbReference type="GO" id="GO:0022627">
    <property type="term" value="C:cytosolic small ribosomal subunit"/>
    <property type="evidence" value="ECO:0007669"/>
    <property type="project" value="TreeGrafter"/>
</dbReference>
<dbReference type="GO" id="GO:0003729">
    <property type="term" value="F:mRNA binding"/>
    <property type="evidence" value="ECO:0007669"/>
    <property type="project" value="UniProtKB-UniRule"/>
</dbReference>
<dbReference type="GO" id="GO:0019843">
    <property type="term" value="F:rRNA binding"/>
    <property type="evidence" value="ECO:0007669"/>
    <property type="project" value="UniProtKB-UniRule"/>
</dbReference>
<dbReference type="GO" id="GO:0003735">
    <property type="term" value="F:structural constituent of ribosome"/>
    <property type="evidence" value="ECO:0007669"/>
    <property type="project" value="InterPro"/>
</dbReference>
<dbReference type="GO" id="GO:0006412">
    <property type="term" value="P:translation"/>
    <property type="evidence" value="ECO:0007669"/>
    <property type="project" value="UniProtKB-UniRule"/>
</dbReference>
<dbReference type="CDD" id="cd02412">
    <property type="entry name" value="KH-II_30S_S3"/>
    <property type="match status" value="1"/>
</dbReference>
<dbReference type="FunFam" id="3.30.1140.32:FF:000009">
    <property type="entry name" value="30S ribosomal protein S3"/>
    <property type="match status" value="1"/>
</dbReference>
<dbReference type="FunFam" id="3.30.300.20:FF:000001">
    <property type="entry name" value="30S ribosomal protein S3"/>
    <property type="match status" value="1"/>
</dbReference>
<dbReference type="Gene3D" id="3.30.300.20">
    <property type="match status" value="1"/>
</dbReference>
<dbReference type="Gene3D" id="3.30.1140.32">
    <property type="entry name" value="Ribosomal protein S3, C-terminal domain"/>
    <property type="match status" value="1"/>
</dbReference>
<dbReference type="HAMAP" id="MF_01309_B">
    <property type="entry name" value="Ribosomal_uS3_B"/>
    <property type="match status" value="1"/>
</dbReference>
<dbReference type="InterPro" id="IPR004087">
    <property type="entry name" value="KH_dom"/>
</dbReference>
<dbReference type="InterPro" id="IPR015946">
    <property type="entry name" value="KH_dom-like_a/b"/>
</dbReference>
<dbReference type="InterPro" id="IPR004044">
    <property type="entry name" value="KH_dom_type_2"/>
</dbReference>
<dbReference type="InterPro" id="IPR009019">
    <property type="entry name" value="KH_sf_prok-type"/>
</dbReference>
<dbReference type="InterPro" id="IPR036419">
    <property type="entry name" value="Ribosomal_S3_C_sf"/>
</dbReference>
<dbReference type="InterPro" id="IPR005704">
    <property type="entry name" value="Ribosomal_uS3_bac-typ"/>
</dbReference>
<dbReference type="InterPro" id="IPR001351">
    <property type="entry name" value="Ribosomal_uS3_C"/>
</dbReference>
<dbReference type="InterPro" id="IPR018280">
    <property type="entry name" value="Ribosomal_uS3_CS"/>
</dbReference>
<dbReference type="NCBIfam" id="TIGR01009">
    <property type="entry name" value="rpsC_bact"/>
    <property type="match status" value="1"/>
</dbReference>
<dbReference type="PANTHER" id="PTHR11760">
    <property type="entry name" value="30S/40S RIBOSOMAL PROTEIN S3"/>
    <property type="match status" value="1"/>
</dbReference>
<dbReference type="PANTHER" id="PTHR11760:SF19">
    <property type="entry name" value="SMALL RIBOSOMAL SUBUNIT PROTEIN US3C"/>
    <property type="match status" value="1"/>
</dbReference>
<dbReference type="Pfam" id="PF07650">
    <property type="entry name" value="KH_2"/>
    <property type="match status" value="1"/>
</dbReference>
<dbReference type="Pfam" id="PF00189">
    <property type="entry name" value="Ribosomal_S3_C"/>
    <property type="match status" value="1"/>
</dbReference>
<dbReference type="SMART" id="SM00322">
    <property type="entry name" value="KH"/>
    <property type="match status" value="1"/>
</dbReference>
<dbReference type="SUPFAM" id="SSF54814">
    <property type="entry name" value="Prokaryotic type KH domain (KH-domain type II)"/>
    <property type="match status" value="1"/>
</dbReference>
<dbReference type="SUPFAM" id="SSF54821">
    <property type="entry name" value="Ribosomal protein S3 C-terminal domain"/>
    <property type="match status" value="1"/>
</dbReference>
<dbReference type="PROSITE" id="PS50823">
    <property type="entry name" value="KH_TYPE_2"/>
    <property type="match status" value="1"/>
</dbReference>
<dbReference type="PROSITE" id="PS00548">
    <property type="entry name" value="RIBOSOMAL_S3"/>
    <property type="match status" value="1"/>
</dbReference>
<name>RS3_PARM1</name>
<organism>
    <name type="scientific">Paramagnetospirillum magneticum (strain ATCC 700264 / AMB-1)</name>
    <name type="common">Magnetospirillum magneticum</name>
    <dbReference type="NCBI Taxonomy" id="342108"/>
    <lineage>
        <taxon>Bacteria</taxon>
        <taxon>Pseudomonadati</taxon>
        <taxon>Pseudomonadota</taxon>
        <taxon>Alphaproteobacteria</taxon>
        <taxon>Rhodospirillales</taxon>
        <taxon>Magnetospirillaceae</taxon>
        <taxon>Paramagnetospirillum</taxon>
    </lineage>
</organism>
<gene>
    <name evidence="1" type="primary">rpsC</name>
    <name type="ordered locus">amb3124</name>
</gene>
<protein>
    <recommendedName>
        <fullName evidence="1">Small ribosomal subunit protein uS3</fullName>
    </recommendedName>
    <alternativeName>
        <fullName evidence="2">30S ribosomal protein S3</fullName>
    </alternativeName>
</protein>
<feature type="chain" id="PRO_0000293820" description="Small ribosomal subunit protein uS3">
    <location>
        <begin position="1"/>
        <end position="227"/>
    </location>
</feature>
<feature type="domain" description="KH type-2" evidence="1">
    <location>
        <begin position="38"/>
        <end position="106"/>
    </location>
</feature>
<comment type="function">
    <text evidence="1">Binds the lower part of the 30S subunit head. Binds mRNA in the 70S ribosome, positioning it for translation.</text>
</comment>
<comment type="subunit">
    <text evidence="1">Part of the 30S ribosomal subunit. Forms a tight complex with proteins S10 and S14.</text>
</comment>
<comment type="similarity">
    <text evidence="1">Belongs to the universal ribosomal protein uS3 family.</text>
</comment>
<accession>Q2W2J7</accession>
<keyword id="KW-0687">Ribonucleoprotein</keyword>
<keyword id="KW-0689">Ribosomal protein</keyword>
<keyword id="KW-0694">RNA-binding</keyword>
<keyword id="KW-0699">rRNA-binding</keyword>
<sequence>MGQKVNPIGLRVGINRTWDSRWFADETYAKLLHQDLKLRKYLREKLAQAGVSRVVIERPAKKARITIHTARPGVVIGKKGADIEVLRKELSKMTGSEVHLNIVEIRKPELDAQLVAESIAQQLERRVAFRRAMKRAVQSAMRLGAQGIRINCSGRLGGAEIARMEWYREGRVPLHTLRADVDYGVGTAHTTYGSCGVKVWVFKGEILAHDPMAQDKRAAGETAPAGR</sequence>